<gene>
    <name evidence="1" type="primary">era</name>
    <name type="ordered locus">Maqu_2244</name>
</gene>
<dbReference type="EMBL" id="CP000514">
    <property type="protein sequence ID" value="ABM19323.1"/>
    <property type="molecule type" value="Genomic_DNA"/>
</dbReference>
<dbReference type="RefSeq" id="WP_011785711.1">
    <property type="nucleotide sequence ID" value="NC_008740.1"/>
</dbReference>
<dbReference type="SMR" id="A1U2V4"/>
<dbReference type="STRING" id="351348.Maqu_2244"/>
<dbReference type="GeneID" id="31820475"/>
<dbReference type="KEGG" id="maq:Maqu_2244"/>
<dbReference type="eggNOG" id="COG1159">
    <property type="taxonomic scope" value="Bacteria"/>
</dbReference>
<dbReference type="HOGENOM" id="CLU_038009_1_2_6"/>
<dbReference type="OrthoDB" id="9805918at2"/>
<dbReference type="Proteomes" id="UP000000998">
    <property type="component" value="Chromosome"/>
</dbReference>
<dbReference type="GO" id="GO:0005829">
    <property type="term" value="C:cytosol"/>
    <property type="evidence" value="ECO:0007669"/>
    <property type="project" value="TreeGrafter"/>
</dbReference>
<dbReference type="GO" id="GO:0005886">
    <property type="term" value="C:plasma membrane"/>
    <property type="evidence" value="ECO:0007669"/>
    <property type="project" value="UniProtKB-SubCell"/>
</dbReference>
<dbReference type="GO" id="GO:0005525">
    <property type="term" value="F:GTP binding"/>
    <property type="evidence" value="ECO:0007669"/>
    <property type="project" value="UniProtKB-UniRule"/>
</dbReference>
<dbReference type="GO" id="GO:0003924">
    <property type="term" value="F:GTPase activity"/>
    <property type="evidence" value="ECO:0007669"/>
    <property type="project" value="UniProtKB-UniRule"/>
</dbReference>
<dbReference type="GO" id="GO:0043024">
    <property type="term" value="F:ribosomal small subunit binding"/>
    <property type="evidence" value="ECO:0007669"/>
    <property type="project" value="TreeGrafter"/>
</dbReference>
<dbReference type="GO" id="GO:0070181">
    <property type="term" value="F:small ribosomal subunit rRNA binding"/>
    <property type="evidence" value="ECO:0007669"/>
    <property type="project" value="UniProtKB-UniRule"/>
</dbReference>
<dbReference type="GO" id="GO:0000028">
    <property type="term" value="P:ribosomal small subunit assembly"/>
    <property type="evidence" value="ECO:0007669"/>
    <property type="project" value="TreeGrafter"/>
</dbReference>
<dbReference type="CDD" id="cd04163">
    <property type="entry name" value="Era"/>
    <property type="match status" value="1"/>
</dbReference>
<dbReference type="CDD" id="cd22534">
    <property type="entry name" value="KH-II_Era"/>
    <property type="match status" value="1"/>
</dbReference>
<dbReference type="FunFam" id="3.30.300.20:FF:000003">
    <property type="entry name" value="GTPase Era"/>
    <property type="match status" value="1"/>
</dbReference>
<dbReference type="FunFam" id="3.40.50.300:FF:000094">
    <property type="entry name" value="GTPase Era"/>
    <property type="match status" value="1"/>
</dbReference>
<dbReference type="Gene3D" id="3.30.300.20">
    <property type="match status" value="1"/>
</dbReference>
<dbReference type="Gene3D" id="3.40.50.300">
    <property type="entry name" value="P-loop containing nucleotide triphosphate hydrolases"/>
    <property type="match status" value="1"/>
</dbReference>
<dbReference type="HAMAP" id="MF_00367">
    <property type="entry name" value="GTPase_Era"/>
    <property type="match status" value="1"/>
</dbReference>
<dbReference type="InterPro" id="IPR030388">
    <property type="entry name" value="G_ERA_dom"/>
</dbReference>
<dbReference type="InterPro" id="IPR006073">
    <property type="entry name" value="GTP-bd"/>
</dbReference>
<dbReference type="InterPro" id="IPR005662">
    <property type="entry name" value="GTPase_Era-like"/>
</dbReference>
<dbReference type="InterPro" id="IPR015946">
    <property type="entry name" value="KH_dom-like_a/b"/>
</dbReference>
<dbReference type="InterPro" id="IPR004044">
    <property type="entry name" value="KH_dom_type_2"/>
</dbReference>
<dbReference type="InterPro" id="IPR009019">
    <property type="entry name" value="KH_sf_prok-type"/>
</dbReference>
<dbReference type="InterPro" id="IPR027417">
    <property type="entry name" value="P-loop_NTPase"/>
</dbReference>
<dbReference type="InterPro" id="IPR005225">
    <property type="entry name" value="Small_GTP-bd"/>
</dbReference>
<dbReference type="NCBIfam" id="TIGR00436">
    <property type="entry name" value="era"/>
    <property type="match status" value="1"/>
</dbReference>
<dbReference type="NCBIfam" id="NF000908">
    <property type="entry name" value="PRK00089.1"/>
    <property type="match status" value="1"/>
</dbReference>
<dbReference type="NCBIfam" id="TIGR00231">
    <property type="entry name" value="small_GTP"/>
    <property type="match status" value="1"/>
</dbReference>
<dbReference type="PANTHER" id="PTHR42698">
    <property type="entry name" value="GTPASE ERA"/>
    <property type="match status" value="1"/>
</dbReference>
<dbReference type="PANTHER" id="PTHR42698:SF1">
    <property type="entry name" value="GTPASE ERA, MITOCHONDRIAL"/>
    <property type="match status" value="1"/>
</dbReference>
<dbReference type="Pfam" id="PF07650">
    <property type="entry name" value="KH_2"/>
    <property type="match status" value="1"/>
</dbReference>
<dbReference type="Pfam" id="PF01926">
    <property type="entry name" value="MMR_HSR1"/>
    <property type="match status" value="1"/>
</dbReference>
<dbReference type="PRINTS" id="PR00326">
    <property type="entry name" value="GTP1OBG"/>
</dbReference>
<dbReference type="SUPFAM" id="SSF52540">
    <property type="entry name" value="P-loop containing nucleoside triphosphate hydrolases"/>
    <property type="match status" value="1"/>
</dbReference>
<dbReference type="SUPFAM" id="SSF54814">
    <property type="entry name" value="Prokaryotic type KH domain (KH-domain type II)"/>
    <property type="match status" value="1"/>
</dbReference>
<dbReference type="PROSITE" id="PS51713">
    <property type="entry name" value="G_ERA"/>
    <property type="match status" value="1"/>
</dbReference>
<dbReference type="PROSITE" id="PS50823">
    <property type="entry name" value="KH_TYPE_2"/>
    <property type="match status" value="1"/>
</dbReference>
<protein>
    <recommendedName>
        <fullName evidence="1">GTPase Era</fullName>
    </recommendedName>
</protein>
<feature type="chain" id="PRO_1000079707" description="GTPase Era">
    <location>
        <begin position="1"/>
        <end position="305"/>
    </location>
</feature>
<feature type="domain" description="Era-type G" evidence="2">
    <location>
        <begin position="13"/>
        <end position="181"/>
    </location>
</feature>
<feature type="domain" description="KH type-2" evidence="1">
    <location>
        <begin position="204"/>
        <end position="288"/>
    </location>
</feature>
<feature type="region of interest" description="G1" evidence="2">
    <location>
        <begin position="21"/>
        <end position="28"/>
    </location>
</feature>
<feature type="region of interest" description="G2" evidence="2">
    <location>
        <begin position="47"/>
        <end position="51"/>
    </location>
</feature>
<feature type="region of interest" description="G3" evidence="2">
    <location>
        <begin position="68"/>
        <end position="71"/>
    </location>
</feature>
<feature type="region of interest" description="G4" evidence="2">
    <location>
        <begin position="130"/>
        <end position="133"/>
    </location>
</feature>
<feature type="region of interest" description="G5" evidence="2">
    <location>
        <begin position="160"/>
        <end position="162"/>
    </location>
</feature>
<feature type="binding site" evidence="1">
    <location>
        <begin position="21"/>
        <end position="28"/>
    </location>
    <ligand>
        <name>GTP</name>
        <dbReference type="ChEBI" id="CHEBI:37565"/>
    </ligand>
</feature>
<feature type="binding site" evidence="1">
    <location>
        <begin position="68"/>
        <end position="72"/>
    </location>
    <ligand>
        <name>GTP</name>
        <dbReference type="ChEBI" id="CHEBI:37565"/>
    </ligand>
</feature>
<feature type="binding site" evidence="1">
    <location>
        <begin position="130"/>
        <end position="133"/>
    </location>
    <ligand>
        <name>GTP</name>
        <dbReference type="ChEBI" id="CHEBI:37565"/>
    </ligand>
</feature>
<evidence type="ECO:0000255" key="1">
    <source>
        <dbReference type="HAMAP-Rule" id="MF_00367"/>
    </source>
</evidence>
<evidence type="ECO:0000255" key="2">
    <source>
        <dbReference type="PROSITE-ProRule" id="PRU01050"/>
    </source>
</evidence>
<organism>
    <name type="scientific">Marinobacter nauticus (strain ATCC 700491 / DSM 11845 / VT8)</name>
    <name type="common">Marinobacter aquaeolei</name>
    <dbReference type="NCBI Taxonomy" id="351348"/>
    <lineage>
        <taxon>Bacteria</taxon>
        <taxon>Pseudomonadati</taxon>
        <taxon>Pseudomonadota</taxon>
        <taxon>Gammaproteobacteria</taxon>
        <taxon>Pseudomonadales</taxon>
        <taxon>Marinobacteraceae</taxon>
        <taxon>Marinobacter</taxon>
    </lineage>
</organism>
<comment type="function">
    <text evidence="1">An essential GTPase that binds both GDP and GTP, with rapid nucleotide exchange. Plays a role in 16S rRNA processing and 30S ribosomal subunit biogenesis and possibly also in cell cycle regulation and energy metabolism.</text>
</comment>
<comment type="subunit">
    <text evidence="1">Monomer.</text>
</comment>
<comment type="subcellular location">
    <subcellularLocation>
        <location>Cytoplasm</location>
    </subcellularLocation>
    <subcellularLocation>
        <location evidence="1">Cell inner membrane</location>
        <topology evidence="1">Peripheral membrane protein</topology>
    </subcellularLocation>
</comment>
<comment type="similarity">
    <text evidence="1 2">Belongs to the TRAFAC class TrmE-Era-EngA-EngB-Septin-like GTPase superfamily. Era GTPase family.</text>
</comment>
<accession>A1U2V4</accession>
<keyword id="KW-0997">Cell inner membrane</keyword>
<keyword id="KW-1003">Cell membrane</keyword>
<keyword id="KW-0963">Cytoplasm</keyword>
<keyword id="KW-0342">GTP-binding</keyword>
<keyword id="KW-0472">Membrane</keyword>
<keyword id="KW-0547">Nucleotide-binding</keyword>
<keyword id="KW-0690">Ribosome biogenesis</keyword>
<keyword id="KW-0694">RNA-binding</keyword>
<keyword id="KW-0699">rRNA-binding</keyword>
<proteinExistence type="inferred from homology"/>
<reference key="1">
    <citation type="journal article" date="2011" name="Appl. Environ. Microbiol.">
        <title>Genomic potential of Marinobacter aquaeolei, a biogeochemical 'opportunitroph'.</title>
        <authorList>
            <person name="Singer E."/>
            <person name="Webb E.A."/>
            <person name="Nelson W.C."/>
            <person name="Heidelberg J.F."/>
            <person name="Ivanova N."/>
            <person name="Pati A."/>
            <person name="Edwards K.J."/>
        </authorList>
    </citation>
    <scope>NUCLEOTIDE SEQUENCE [LARGE SCALE GENOMIC DNA]</scope>
    <source>
        <strain>ATCC 700491 / DSM 11845 / VT8</strain>
    </source>
</reference>
<sequence length="305" mass="34418">MTDITRPENPESRCGFVAIVGRPNVGKSTLLNHILGQKLSITSRKPQTTRHQVLGIKTEGPVQAIYVDTPGMHEDEPRALNRYMNKAAASALIDVDVVVFVVDQLAWTSADEMVLEKLKRVKCPVILAVNKVDKLEKRELLLPHLEALSKKRDFAEIIPLSALKETNLEPLESAVGRFLPESVHFYPDDQITDRSERFMAAEMVREKITRQLGAELPYSVAVEIEEFKHQGNTLHVSALILVEREGQKKIIIGDKGERLRSIGQEARVDMERMFGSKVMLRLWVKVKRGWADSDRALKSLGMSDF</sequence>
<name>ERA_MARN8</name>